<proteinExistence type="inferred from homology"/>
<name>WECG_YERP3</name>
<comment type="function">
    <text evidence="1">Catalyzes the synthesis of Und-PP-GlcNAc-ManNAcA (Lipid II), the second lipid-linked intermediate involved in enterobacterial common antigen (ECA) synthesis.</text>
</comment>
<comment type="catalytic activity">
    <reaction evidence="1">
        <text>UDP-N-acetyl-alpha-D-mannosaminouronate + N-acetyl-alpha-D-glucosaminyl-di-trans,octa-cis-undecaprenyl diphosphate = beta-D-ManNAcA-(1-&gt;4)-alpha-D-GlcNAc-di-trans,octa-cis-undecaprenyl diphosphate + UDP + H(+)</text>
        <dbReference type="Rhea" id="RHEA:28366"/>
        <dbReference type="ChEBI" id="CHEBI:15378"/>
        <dbReference type="ChEBI" id="CHEBI:58223"/>
        <dbReference type="ChEBI" id="CHEBI:61495"/>
        <dbReference type="ChEBI" id="CHEBI:62959"/>
        <dbReference type="ChEBI" id="CHEBI:70731"/>
        <dbReference type="EC" id="2.4.1.180"/>
    </reaction>
</comment>
<comment type="pathway">
    <text evidence="1">Bacterial outer membrane biogenesis; enterobacterial common antigen biosynthesis.</text>
</comment>
<comment type="similarity">
    <text evidence="1">Belongs to the glycosyltransferase 26 family.</text>
</comment>
<gene>
    <name evidence="1" type="primary">wecG</name>
    <name evidence="1" type="synonym">rffM</name>
    <name type="ordered locus">YpsIP31758_0193</name>
</gene>
<keyword id="KW-0328">Glycosyltransferase</keyword>
<keyword id="KW-0808">Transferase</keyword>
<accession>A7FD62</accession>
<organism>
    <name type="scientific">Yersinia pseudotuberculosis serotype O:1b (strain IP 31758)</name>
    <dbReference type="NCBI Taxonomy" id="349747"/>
    <lineage>
        <taxon>Bacteria</taxon>
        <taxon>Pseudomonadati</taxon>
        <taxon>Pseudomonadota</taxon>
        <taxon>Gammaproteobacteria</taxon>
        <taxon>Enterobacterales</taxon>
        <taxon>Yersiniaceae</taxon>
        <taxon>Yersinia</taxon>
    </lineage>
</organism>
<reference key="1">
    <citation type="journal article" date="2007" name="PLoS Genet.">
        <title>The complete genome sequence of Yersinia pseudotuberculosis IP31758, the causative agent of Far East scarlet-like fever.</title>
        <authorList>
            <person name="Eppinger M."/>
            <person name="Rosovitz M.J."/>
            <person name="Fricke W.F."/>
            <person name="Rasko D.A."/>
            <person name="Kokorina G."/>
            <person name="Fayolle C."/>
            <person name="Lindler L.E."/>
            <person name="Carniel E."/>
            <person name="Ravel J."/>
        </authorList>
    </citation>
    <scope>NUCLEOTIDE SEQUENCE [LARGE SCALE GENOMIC DNA]</scope>
    <source>
        <strain>IP 31758</strain>
    </source>
</reference>
<sequence>MEPNTVIPKYNVRGFEIWGFRDMAQVLDHLLGSGPVKTGTLVAMNAEKLLKAEDDTALCELIKNAEYLYADGISMVRAIRRKYPQAELSRVAGADLWEALMQRAGQQGTPVFLVGGKPDVLAETEAKLRAQWNVNLVGSQDGYFTPEQREALFARIAASGAAIVTVAMGSPKQEIFMRDCRKFYPDALYMGVGGTYDVFTGHVKRAPKIWQNMGLEWLYRLLAQPSRIRRQLKLLKFVGYYYSGRL</sequence>
<feature type="chain" id="PRO_1000062735" description="UDP-N-acetyl-D-mannosaminuronic acid transferase">
    <location>
        <begin position="1"/>
        <end position="246"/>
    </location>
</feature>
<evidence type="ECO:0000255" key="1">
    <source>
        <dbReference type="HAMAP-Rule" id="MF_01001"/>
    </source>
</evidence>
<protein>
    <recommendedName>
        <fullName evidence="1">UDP-N-acetyl-D-mannosaminuronic acid transferase</fullName>
        <shortName evidence="1">UDP-ManNAcA transferase</shortName>
        <ecNumber evidence="1">2.4.1.180</ecNumber>
    </recommendedName>
</protein>
<dbReference type="EC" id="2.4.1.180" evidence="1"/>
<dbReference type="EMBL" id="CP000720">
    <property type="protein sequence ID" value="ABS45796.1"/>
    <property type="molecule type" value="Genomic_DNA"/>
</dbReference>
<dbReference type="RefSeq" id="WP_011191504.1">
    <property type="nucleotide sequence ID" value="NC_009708.1"/>
</dbReference>
<dbReference type="SMR" id="A7FD62"/>
<dbReference type="CAZy" id="GT26">
    <property type="family name" value="Glycosyltransferase Family 26"/>
</dbReference>
<dbReference type="GeneID" id="49787845"/>
<dbReference type="KEGG" id="ypi:YpsIP31758_0193"/>
<dbReference type="HOGENOM" id="CLU_063203_3_2_6"/>
<dbReference type="UniPathway" id="UPA00566"/>
<dbReference type="Proteomes" id="UP000002412">
    <property type="component" value="Chromosome"/>
</dbReference>
<dbReference type="GO" id="GO:0047241">
    <property type="term" value="F:lipopolysaccharide N-acetylmannosaminouronosyltransferase activity"/>
    <property type="evidence" value="ECO:0007669"/>
    <property type="project" value="UniProtKB-UniRule"/>
</dbReference>
<dbReference type="GO" id="GO:0009246">
    <property type="term" value="P:enterobacterial common antigen biosynthetic process"/>
    <property type="evidence" value="ECO:0007669"/>
    <property type="project" value="UniProtKB-UniRule"/>
</dbReference>
<dbReference type="CDD" id="cd06533">
    <property type="entry name" value="Glyco_transf_WecG_TagA"/>
    <property type="match status" value="1"/>
</dbReference>
<dbReference type="HAMAP" id="MF_01001">
    <property type="entry name" value="WecG_RffM"/>
    <property type="match status" value="1"/>
</dbReference>
<dbReference type="InterPro" id="IPR023085">
    <property type="entry name" value="UDP-ManNAcA_Trfase_WecG"/>
</dbReference>
<dbReference type="InterPro" id="IPR004629">
    <property type="entry name" value="WecG_TagA_CpsF"/>
</dbReference>
<dbReference type="NCBIfam" id="NF002980">
    <property type="entry name" value="PRK03692.1"/>
    <property type="match status" value="1"/>
</dbReference>
<dbReference type="NCBIfam" id="TIGR00696">
    <property type="entry name" value="wecG_tagA_cpsF"/>
    <property type="match status" value="1"/>
</dbReference>
<dbReference type="PANTHER" id="PTHR34136">
    <property type="match status" value="1"/>
</dbReference>
<dbReference type="PANTHER" id="PTHR34136:SF1">
    <property type="entry name" value="UDP-N-ACETYL-D-MANNOSAMINURONIC ACID TRANSFERASE"/>
    <property type="match status" value="1"/>
</dbReference>
<dbReference type="Pfam" id="PF03808">
    <property type="entry name" value="Glyco_tran_WecG"/>
    <property type="match status" value="1"/>
</dbReference>